<gene>
    <name evidence="1" type="primary">purQ</name>
    <name type="ordered locus">PF0198</name>
</gene>
<keyword id="KW-0067">ATP-binding</keyword>
<keyword id="KW-0963">Cytoplasm</keyword>
<keyword id="KW-0315">Glutamine amidotransferase</keyword>
<keyword id="KW-0378">Hydrolase</keyword>
<keyword id="KW-0436">Ligase</keyword>
<keyword id="KW-0547">Nucleotide-binding</keyword>
<keyword id="KW-0658">Purine biosynthesis</keyword>
<keyword id="KW-1185">Reference proteome</keyword>
<name>PURQ_PYRFU</name>
<feature type="chain" id="PRO_0000100616" description="Phosphoribosylformylglycinamidine synthase subunit PurQ">
    <location>
        <begin position="1"/>
        <end position="223"/>
    </location>
</feature>
<feature type="domain" description="Glutamine amidotransferase type-1" evidence="1">
    <location>
        <begin position="4"/>
        <end position="223"/>
    </location>
</feature>
<feature type="active site" description="Nucleophile" evidence="1">
    <location>
        <position position="85"/>
    </location>
</feature>
<feature type="active site" evidence="1">
    <location>
        <position position="196"/>
    </location>
</feature>
<feature type="active site" evidence="1">
    <location>
        <position position="198"/>
    </location>
</feature>
<proteinExistence type="inferred from homology"/>
<dbReference type="EC" id="6.3.5.3" evidence="1"/>
<dbReference type="EC" id="3.5.1.2" evidence="1"/>
<dbReference type="EMBL" id="AE009950">
    <property type="protein sequence ID" value="AAL80322.1"/>
    <property type="status" value="ALT_INIT"/>
    <property type="molecule type" value="Genomic_DNA"/>
</dbReference>
<dbReference type="RefSeq" id="WP_014835081.1">
    <property type="nucleotide sequence ID" value="NZ_CP023154.1"/>
</dbReference>
<dbReference type="SMR" id="Q8U492"/>
<dbReference type="STRING" id="186497.PF0198"/>
<dbReference type="PaxDb" id="186497-PF0198"/>
<dbReference type="GeneID" id="41711989"/>
<dbReference type="KEGG" id="pfu:PF0198"/>
<dbReference type="PATRIC" id="fig|186497.12.peg.205"/>
<dbReference type="eggNOG" id="arCOG00102">
    <property type="taxonomic scope" value="Archaea"/>
</dbReference>
<dbReference type="HOGENOM" id="CLU_001031_3_1_2"/>
<dbReference type="OrthoDB" id="6486at2157"/>
<dbReference type="PhylomeDB" id="Q8U492"/>
<dbReference type="UniPathway" id="UPA00074">
    <property type="reaction ID" value="UER00128"/>
</dbReference>
<dbReference type="Proteomes" id="UP000001013">
    <property type="component" value="Chromosome"/>
</dbReference>
<dbReference type="GO" id="GO:0005737">
    <property type="term" value="C:cytoplasm"/>
    <property type="evidence" value="ECO:0007669"/>
    <property type="project" value="UniProtKB-SubCell"/>
</dbReference>
<dbReference type="GO" id="GO:0005524">
    <property type="term" value="F:ATP binding"/>
    <property type="evidence" value="ECO:0007669"/>
    <property type="project" value="UniProtKB-KW"/>
</dbReference>
<dbReference type="GO" id="GO:0004359">
    <property type="term" value="F:glutaminase activity"/>
    <property type="evidence" value="ECO:0007669"/>
    <property type="project" value="UniProtKB-EC"/>
</dbReference>
<dbReference type="GO" id="GO:0004642">
    <property type="term" value="F:phosphoribosylformylglycinamidine synthase activity"/>
    <property type="evidence" value="ECO:0007669"/>
    <property type="project" value="UniProtKB-UniRule"/>
</dbReference>
<dbReference type="GO" id="GO:0006189">
    <property type="term" value="P:'de novo' IMP biosynthetic process"/>
    <property type="evidence" value="ECO:0007669"/>
    <property type="project" value="UniProtKB-UniRule"/>
</dbReference>
<dbReference type="CDD" id="cd01740">
    <property type="entry name" value="GATase1_FGAR_AT"/>
    <property type="match status" value="1"/>
</dbReference>
<dbReference type="Gene3D" id="3.40.50.880">
    <property type="match status" value="1"/>
</dbReference>
<dbReference type="HAMAP" id="MF_00421">
    <property type="entry name" value="PurQ"/>
    <property type="match status" value="1"/>
</dbReference>
<dbReference type="InterPro" id="IPR029062">
    <property type="entry name" value="Class_I_gatase-like"/>
</dbReference>
<dbReference type="InterPro" id="IPR010075">
    <property type="entry name" value="PRibForGlyAmidine_synth_PurQ"/>
</dbReference>
<dbReference type="NCBIfam" id="TIGR01737">
    <property type="entry name" value="FGAM_synth_I"/>
    <property type="match status" value="1"/>
</dbReference>
<dbReference type="NCBIfam" id="NF002957">
    <property type="entry name" value="PRK03619.1"/>
    <property type="match status" value="1"/>
</dbReference>
<dbReference type="PANTHER" id="PTHR47552">
    <property type="entry name" value="PHOSPHORIBOSYLFORMYLGLYCINAMIDINE SYNTHASE SUBUNIT PURQ"/>
    <property type="match status" value="1"/>
</dbReference>
<dbReference type="PANTHER" id="PTHR47552:SF1">
    <property type="entry name" value="PHOSPHORIBOSYLFORMYLGLYCINAMIDINE SYNTHASE SUBUNIT PURQ"/>
    <property type="match status" value="1"/>
</dbReference>
<dbReference type="Pfam" id="PF13507">
    <property type="entry name" value="GATase_5"/>
    <property type="match status" value="1"/>
</dbReference>
<dbReference type="PIRSF" id="PIRSF001586">
    <property type="entry name" value="FGAM_synth_I"/>
    <property type="match status" value="1"/>
</dbReference>
<dbReference type="SMART" id="SM01211">
    <property type="entry name" value="GATase_5"/>
    <property type="match status" value="1"/>
</dbReference>
<dbReference type="SUPFAM" id="SSF52317">
    <property type="entry name" value="Class I glutamine amidotransferase-like"/>
    <property type="match status" value="1"/>
</dbReference>
<dbReference type="PROSITE" id="PS51273">
    <property type="entry name" value="GATASE_TYPE_1"/>
    <property type="match status" value="1"/>
</dbReference>
<organism>
    <name type="scientific">Pyrococcus furiosus (strain ATCC 43587 / DSM 3638 / JCM 8422 / Vc1)</name>
    <dbReference type="NCBI Taxonomy" id="186497"/>
    <lineage>
        <taxon>Archaea</taxon>
        <taxon>Methanobacteriati</taxon>
        <taxon>Methanobacteriota</taxon>
        <taxon>Thermococci</taxon>
        <taxon>Thermococcales</taxon>
        <taxon>Thermococcaceae</taxon>
        <taxon>Pyrococcus</taxon>
    </lineage>
</organism>
<evidence type="ECO:0000255" key="1">
    <source>
        <dbReference type="HAMAP-Rule" id="MF_00421"/>
    </source>
</evidence>
<evidence type="ECO:0000305" key="2"/>
<accession>Q8U492</accession>
<reference key="1">
    <citation type="journal article" date="1999" name="Genetics">
        <title>Divergence of the hyperthermophilic archaea Pyrococcus furiosus and P. horikoshii inferred from complete genomic sequences.</title>
        <authorList>
            <person name="Maeder D.L."/>
            <person name="Weiss R.B."/>
            <person name="Dunn D.M."/>
            <person name="Cherry J.L."/>
            <person name="Gonzalez J.M."/>
            <person name="DiRuggiero J."/>
            <person name="Robb F.T."/>
        </authorList>
    </citation>
    <scope>NUCLEOTIDE SEQUENCE [LARGE SCALE GENOMIC DNA]</scope>
    <source>
        <strain>ATCC 43587 / DSM 3638 / JCM 8422 / Vc1</strain>
    </source>
</reference>
<sequence length="223" mass="24893">MVKFAVVVFPGTNCDFETVEAIKRAGGKAERVWYKDSIKDYDGVVIPGGFSYADYLRAGAIAARQRIMEEIRELAEEGRPILGICNGFQILTEAGLLPGALRPNKIPRFLCKWVHLKVVDVRTPFTYLYEEGEVVRMPIAHAEGNYYIDDPSKVRIVFQYSDEKGSITEEANPNGSVLNIAGVANMEGNILGMMPHPERASHYFLGSEDGLKVFKGMVEWVRS</sequence>
<comment type="function">
    <text evidence="1">Part of the phosphoribosylformylglycinamidine synthase complex involved in the purines biosynthetic pathway. Catalyzes the ATP-dependent conversion of formylglycinamide ribonucleotide (FGAR) and glutamine to yield formylglycinamidine ribonucleotide (FGAM) and glutamate. The FGAM synthase complex is composed of three subunits. PurQ produces an ammonia molecule by converting glutamine to glutamate. PurL transfers the ammonia molecule to FGAR to form FGAM in an ATP-dependent manner. PurS interacts with PurQ and PurL and is thought to assist in the transfer of the ammonia molecule from PurQ to PurL.</text>
</comment>
<comment type="catalytic activity">
    <reaction evidence="1">
        <text>N(2)-formyl-N(1)-(5-phospho-beta-D-ribosyl)glycinamide + L-glutamine + ATP + H2O = 2-formamido-N(1)-(5-O-phospho-beta-D-ribosyl)acetamidine + L-glutamate + ADP + phosphate + H(+)</text>
        <dbReference type="Rhea" id="RHEA:17129"/>
        <dbReference type="ChEBI" id="CHEBI:15377"/>
        <dbReference type="ChEBI" id="CHEBI:15378"/>
        <dbReference type="ChEBI" id="CHEBI:29985"/>
        <dbReference type="ChEBI" id="CHEBI:30616"/>
        <dbReference type="ChEBI" id="CHEBI:43474"/>
        <dbReference type="ChEBI" id="CHEBI:58359"/>
        <dbReference type="ChEBI" id="CHEBI:147286"/>
        <dbReference type="ChEBI" id="CHEBI:147287"/>
        <dbReference type="ChEBI" id="CHEBI:456216"/>
        <dbReference type="EC" id="6.3.5.3"/>
    </reaction>
</comment>
<comment type="catalytic activity">
    <reaction evidence="1">
        <text>L-glutamine + H2O = L-glutamate + NH4(+)</text>
        <dbReference type="Rhea" id="RHEA:15889"/>
        <dbReference type="ChEBI" id="CHEBI:15377"/>
        <dbReference type="ChEBI" id="CHEBI:28938"/>
        <dbReference type="ChEBI" id="CHEBI:29985"/>
        <dbReference type="ChEBI" id="CHEBI:58359"/>
        <dbReference type="EC" id="3.5.1.2"/>
    </reaction>
</comment>
<comment type="pathway">
    <text evidence="1">Purine metabolism; IMP biosynthesis via de novo pathway; 5-amino-1-(5-phospho-D-ribosyl)imidazole from N(2)-formyl-N(1)-(5-phospho-D-ribosyl)glycinamide: step 1/2.</text>
</comment>
<comment type="subunit">
    <text evidence="1">Part of the FGAM synthase complex composed of 1 PurL, 1 PurQ and 2 PurS subunits.</text>
</comment>
<comment type="subcellular location">
    <subcellularLocation>
        <location evidence="1">Cytoplasm</location>
    </subcellularLocation>
</comment>
<comment type="sequence caution" evidence="2">
    <conflict type="erroneous initiation">
        <sequence resource="EMBL-CDS" id="AAL80322"/>
    </conflict>
    <text>Extended N-terminus.</text>
</comment>
<protein>
    <recommendedName>
        <fullName evidence="1">Phosphoribosylformylglycinamidine synthase subunit PurQ</fullName>
        <shortName evidence="1">FGAM synthase</shortName>
        <ecNumber evidence="1">6.3.5.3</ecNumber>
    </recommendedName>
    <alternativeName>
        <fullName evidence="1">Formylglycinamide ribonucleotide amidotransferase subunit I</fullName>
        <shortName evidence="1">FGAR amidotransferase I</shortName>
        <shortName evidence="1">FGAR-AT I</shortName>
    </alternativeName>
    <alternativeName>
        <fullName evidence="1">Glutaminase PurQ</fullName>
        <ecNumber evidence="1">3.5.1.2</ecNumber>
    </alternativeName>
    <alternativeName>
        <fullName evidence="1">Phosphoribosylformylglycinamidine synthase subunit I</fullName>
    </alternativeName>
</protein>